<gene>
    <name type="primary">FABP3</name>
    <name type="synonym">FABP11</name>
    <name type="synonym">MDGI</name>
</gene>
<name>FABPH_HUMAN</name>
<protein>
    <recommendedName>
        <fullName>Fatty acid-binding protein, heart</fullName>
    </recommendedName>
    <alternativeName>
        <fullName>Fatty acid-binding protein 3</fullName>
    </alternativeName>
    <alternativeName>
        <fullName>Heart-type fatty acid-binding protein</fullName>
        <shortName>H-FABP</shortName>
    </alternativeName>
    <alternativeName>
        <fullName>Mammary-derived growth inhibitor</fullName>
        <shortName>MDGI</shortName>
    </alternativeName>
    <alternativeName>
        <fullName>Muscle fatty acid-binding protein</fullName>
        <shortName>M-FABP</shortName>
    </alternativeName>
</protein>
<organism>
    <name type="scientific">Homo sapiens</name>
    <name type="common">Human</name>
    <dbReference type="NCBI Taxonomy" id="9606"/>
    <lineage>
        <taxon>Eukaryota</taxon>
        <taxon>Metazoa</taxon>
        <taxon>Chordata</taxon>
        <taxon>Craniata</taxon>
        <taxon>Vertebrata</taxon>
        <taxon>Euteleostomi</taxon>
        <taxon>Mammalia</taxon>
        <taxon>Eutheria</taxon>
        <taxon>Euarchontoglires</taxon>
        <taxon>Primates</taxon>
        <taxon>Haplorrhini</taxon>
        <taxon>Catarrhini</taxon>
        <taxon>Hominidae</taxon>
        <taxon>Homo</taxon>
    </lineage>
</organism>
<sequence>MVDAFLGTWKLVDSKNFDDYMKSLGVGFATRQVASMTKPTTIIEKNGDILTLKTHSTFKNTEISFKLGVEFDETTADDRKVKSIVTLDGGKLVHLQKWDGQETTLVRELIDGKLILTLTHGTAVCTRTYEKEA</sequence>
<feature type="initiator methionine" description="Removed" evidence="3 4 11">
    <location>
        <position position="1"/>
    </location>
</feature>
<feature type="chain" id="PRO_0000067321" description="Fatty acid-binding protein, heart">
    <location>
        <begin position="2"/>
        <end position="133"/>
    </location>
</feature>
<feature type="binding site" evidence="5 8">
    <location>
        <begin position="127"/>
        <end position="129"/>
    </location>
    <ligand>
        <name>(9Z)-octadecenoate</name>
        <dbReference type="ChEBI" id="CHEBI:30823"/>
    </ligand>
</feature>
<feature type="binding site" evidence="2 10">
    <location>
        <begin position="127"/>
        <end position="129"/>
    </location>
    <ligand>
        <name>hexadecanoate</name>
        <dbReference type="ChEBI" id="CHEBI:7896"/>
    </ligand>
</feature>
<feature type="binding site" evidence="5 9">
    <location>
        <begin position="127"/>
        <end position="129"/>
    </location>
    <ligand>
        <name>octadecanoate</name>
        <dbReference type="ChEBI" id="CHEBI:25629"/>
    </ligand>
</feature>
<feature type="modified residue" description="N-acetylvaline" evidence="11">
    <location>
        <position position="2"/>
    </location>
</feature>
<feature type="modified residue" description="Phosphothreonine" evidence="1">
    <location>
        <position position="8"/>
    </location>
</feature>
<feature type="modified residue" description="Phosphotyrosine; by Tyr-kinases" evidence="1">
    <location>
        <position position="20"/>
    </location>
</feature>
<feature type="modified residue" description="Phosphoserine" evidence="1">
    <location>
        <position position="23"/>
    </location>
</feature>
<feature type="modified residue" description="Phosphothreonine" evidence="1">
    <location>
        <position position="30"/>
    </location>
</feature>
<feature type="modified residue" description="Phosphoserine" evidence="1">
    <location>
        <position position="83"/>
    </location>
</feature>
<feature type="sequence variant" id="VAR_061165" description="In dbSNP:rs2228194.">
    <original>K</original>
    <variation>R</variation>
    <location>
        <position position="53"/>
    </location>
</feature>
<feature type="sequence conflict" description="In Ref. 2; CAA71305." evidence="6" ref="2">
    <original>V</original>
    <variation>A</variation>
    <location>
        <position position="2"/>
    </location>
</feature>
<feature type="sequence conflict" description="In Ref. 9; AA sequence." evidence="6" ref="9">
    <original>L</original>
    <variation>K</variation>
    <location>
        <position position="105"/>
    </location>
</feature>
<feature type="sequence conflict" description="In Ref. 9; AA sequence." evidence="6" ref="9">
    <original>C</original>
    <variation>S</variation>
    <location>
        <position position="125"/>
    </location>
</feature>
<feature type="sequence conflict" description="In Ref. 10; AA sequence." evidence="6" ref="10">
    <original>E</original>
    <variation>Q</variation>
    <location>
        <position position="130"/>
    </location>
</feature>
<feature type="helix" evidence="12">
    <location>
        <begin position="3"/>
        <end position="5"/>
    </location>
</feature>
<feature type="strand" evidence="12">
    <location>
        <begin position="7"/>
        <end position="16"/>
    </location>
</feature>
<feature type="helix" evidence="12">
    <location>
        <begin position="17"/>
        <end position="23"/>
    </location>
</feature>
<feature type="helix" evidence="12">
    <location>
        <begin position="28"/>
        <end position="34"/>
    </location>
</feature>
<feature type="strand" evidence="12">
    <location>
        <begin position="40"/>
        <end position="46"/>
    </location>
</feature>
<feature type="strand" evidence="12">
    <location>
        <begin position="49"/>
        <end position="55"/>
    </location>
</feature>
<feature type="strand" evidence="12">
    <location>
        <begin position="61"/>
        <end position="66"/>
    </location>
</feature>
<feature type="strand" evidence="12">
    <location>
        <begin position="71"/>
        <end position="74"/>
    </location>
</feature>
<feature type="strand" evidence="12">
    <location>
        <begin position="80"/>
        <end position="88"/>
    </location>
</feature>
<feature type="strand" evidence="12">
    <location>
        <begin position="91"/>
        <end position="98"/>
    </location>
</feature>
<feature type="strand" evidence="12">
    <location>
        <begin position="101"/>
        <end position="110"/>
    </location>
</feature>
<feature type="strand" evidence="12">
    <location>
        <begin position="113"/>
        <end position="120"/>
    </location>
</feature>
<feature type="strand" evidence="12">
    <location>
        <begin position="123"/>
        <end position="131"/>
    </location>
</feature>
<accession>P05413</accession>
<accession>B2RAB6</accession>
<accession>Q5VV93</accession>
<accession>Q99957</accession>
<evidence type="ECO:0000250" key="1">
    <source>
        <dbReference type="UniProtKB" id="P07483"/>
    </source>
</evidence>
<evidence type="ECO:0000269" key="2">
    <source>
    </source>
</evidence>
<evidence type="ECO:0000269" key="3">
    <source>
    </source>
</evidence>
<evidence type="ECO:0000269" key="4">
    <source>
    </source>
</evidence>
<evidence type="ECO:0000269" key="5">
    <source>
    </source>
</evidence>
<evidence type="ECO:0000305" key="6"/>
<evidence type="ECO:0007744" key="7">
    <source>
        <dbReference type="PDB" id="1HMR"/>
    </source>
</evidence>
<evidence type="ECO:0007744" key="8">
    <source>
        <dbReference type="PDB" id="1HMS"/>
    </source>
</evidence>
<evidence type="ECO:0007744" key="9">
    <source>
        <dbReference type="PDB" id="1HMT"/>
    </source>
</evidence>
<evidence type="ECO:0007744" key="10">
    <source>
        <dbReference type="PDB" id="2HMB"/>
    </source>
</evidence>
<evidence type="ECO:0007744" key="11">
    <source>
    </source>
</evidence>
<evidence type="ECO:0007829" key="12">
    <source>
        <dbReference type="PDB" id="7FEZ"/>
    </source>
</evidence>
<reference key="1">
    <citation type="journal article" date="1991" name="Biochem. J.">
        <title>Cloning of the cDNA encoding human skeletal-muscle fatty-acid-binding protein, its peptide sequence and chromosomal localization.</title>
        <authorList>
            <person name="Peeter R.A."/>
            <person name="Veerkamp J.H."/>
            <person name="Kanda T."/>
            <person name="Ono T."/>
            <person name="Geurts van Kessel A."/>
        </authorList>
    </citation>
    <scope>NUCLEOTIDE SEQUENCE [MRNA]</scope>
    <source>
        <tissue>Skeletal muscle</tissue>
    </source>
</reference>
<reference key="2">
    <citation type="submission" date="1997-03" db="EMBL/GenBank/DDBJ databases">
        <title>Molecular cloning of human mammary-derived growth inhibitor (MDGI) reveals that its expression is associated with breast differentiation, but not with cancer progression.</title>
        <authorList>
            <person name="Hu Y.F."/>
            <person name="Ao X."/>
            <person name="Russo I.H."/>
            <person name="Russo J."/>
        </authorList>
    </citation>
    <scope>NUCLEOTIDE SEQUENCE [MRNA]</scope>
    <source>
        <tissue>Mammary gland</tissue>
    </source>
</reference>
<reference key="3">
    <citation type="submission" date="1994-11" db="EMBL/GenBank/DDBJ databases">
        <title>Genomic organization and complete nucleotide sequence of the human cardiac fatty acid binding protein gene (FABP3), and identification of a closely related genomic sequence.</title>
        <authorList>
            <person name="Wu X."/>
            <person name="Arlt M."/>
            <person name="Goodfellow P.J."/>
            <person name="Rottman J.N."/>
        </authorList>
    </citation>
    <scope>NUCLEOTIDE SEQUENCE [GENOMIC DNA]</scope>
</reference>
<reference key="4">
    <citation type="submission" date="2003-05" db="EMBL/GenBank/DDBJ databases">
        <title>Cloning of human full-length CDSs in BD Creator(TM) system donor vector.</title>
        <authorList>
            <person name="Kalnine N."/>
            <person name="Chen X."/>
            <person name="Rolfs A."/>
            <person name="Halleck A."/>
            <person name="Hines L."/>
            <person name="Eisenstein S."/>
            <person name="Koundinya M."/>
            <person name="Raphael J."/>
            <person name="Moreira D."/>
            <person name="Kelley T."/>
            <person name="LaBaer J."/>
            <person name="Lin Y."/>
            <person name="Phelan M."/>
            <person name="Farmer A."/>
        </authorList>
    </citation>
    <scope>NUCLEOTIDE SEQUENCE [LARGE SCALE MRNA]</scope>
</reference>
<reference key="5">
    <citation type="journal article" date="2004" name="Nat. Genet.">
        <title>Complete sequencing and characterization of 21,243 full-length human cDNAs.</title>
        <authorList>
            <person name="Ota T."/>
            <person name="Suzuki Y."/>
            <person name="Nishikawa T."/>
            <person name="Otsuki T."/>
            <person name="Sugiyama T."/>
            <person name="Irie R."/>
            <person name="Wakamatsu A."/>
            <person name="Hayashi K."/>
            <person name="Sato H."/>
            <person name="Nagai K."/>
            <person name="Kimura K."/>
            <person name="Makita H."/>
            <person name="Sekine M."/>
            <person name="Obayashi M."/>
            <person name="Nishi T."/>
            <person name="Shibahara T."/>
            <person name="Tanaka T."/>
            <person name="Ishii S."/>
            <person name="Yamamoto J."/>
            <person name="Saito K."/>
            <person name="Kawai Y."/>
            <person name="Isono Y."/>
            <person name="Nakamura Y."/>
            <person name="Nagahari K."/>
            <person name="Murakami K."/>
            <person name="Yasuda T."/>
            <person name="Iwayanagi T."/>
            <person name="Wagatsuma M."/>
            <person name="Shiratori A."/>
            <person name="Sudo H."/>
            <person name="Hosoiri T."/>
            <person name="Kaku Y."/>
            <person name="Kodaira H."/>
            <person name="Kondo H."/>
            <person name="Sugawara M."/>
            <person name="Takahashi M."/>
            <person name="Kanda K."/>
            <person name="Yokoi T."/>
            <person name="Furuya T."/>
            <person name="Kikkawa E."/>
            <person name="Omura Y."/>
            <person name="Abe K."/>
            <person name="Kamihara K."/>
            <person name="Katsuta N."/>
            <person name="Sato K."/>
            <person name="Tanikawa M."/>
            <person name="Yamazaki M."/>
            <person name="Ninomiya K."/>
            <person name="Ishibashi T."/>
            <person name="Yamashita H."/>
            <person name="Murakawa K."/>
            <person name="Fujimori K."/>
            <person name="Tanai H."/>
            <person name="Kimata M."/>
            <person name="Watanabe M."/>
            <person name="Hiraoka S."/>
            <person name="Chiba Y."/>
            <person name="Ishida S."/>
            <person name="Ono Y."/>
            <person name="Takiguchi S."/>
            <person name="Watanabe S."/>
            <person name="Yosida M."/>
            <person name="Hotuta T."/>
            <person name="Kusano J."/>
            <person name="Kanehori K."/>
            <person name="Takahashi-Fujii A."/>
            <person name="Hara H."/>
            <person name="Tanase T.-O."/>
            <person name="Nomura Y."/>
            <person name="Togiya S."/>
            <person name="Komai F."/>
            <person name="Hara R."/>
            <person name="Takeuchi K."/>
            <person name="Arita M."/>
            <person name="Imose N."/>
            <person name="Musashino K."/>
            <person name="Yuuki H."/>
            <person name="Oshima A."/>
            <person name="Sasaki N."/>
            <person name="Aotsuka S."/>
            <person name="Yoshikawa Y."/>
            <person name="Matsunawa H."/>
            <person name="Ichihara T."/>
            <person name="Shiohata N."/>
            <person name="Sano S."/>
            <person name="Moriya S."/>
            <person name="Momiyama H."/>
            <person name="Satoh N."/>
            <person name="Takami S."/>
            <person name="Terashima Y."/>
            <person name="Suzuki O."/>
            <person name="Nakagawa S."/>
            <person name="Senoh A."/>
            <person name="Mizoguchi H."/>
            <person name="Goto Y."/>
            <person name="Shimizu F."/>
            <person name="Wakebe H."/>
            <person name="Hishigaki H."/>
            <person name="Watanabe T."/>
            <person name="Sugiyama A."/>
            <person name="Takemoto M."/>
            <person name="Kawakami B."/>
            <person name="Yamazaki M."/>
            <person name="Watanabe K."/>
            <person name="Kumagai A."/>
            <person name="Itakura S."/>
            <person name="Fukuzumi Y."/>
            <person name="Fujimori Y."/>
            <person name="Komiyama M."/>
            <person name="Tashiro H."/>
            <person name="Tanigami A."/>
            <person name="Fujiwara T."/>
            <person name="Ono T."/>
            <person name="Yamada K."/>
            <person name="Fujii Y."/>
            <person name="Ozaki K."/>
            <person name="Hirao M."/>
            <person name="Ohmori Y."/>
            <person name="Kawabata A."/>
            <person name="Hikiji T."/>
            <person name="Kobatake N."/>
            <person name="Inagaki H."/>
            <person name="Ikema Y."/>
            <person name="Okamoto S."/>
            <person name="Okitani R."/>
            <person name="Kawakami T."/>
            <person name="Noguchi S."/>
            <person name="Itoh T."/>
            <person name="Shigeta K."/>
            <person name="Senba T."/>
            <person name="Matsumura K."/>
            <person name="Nakajima Y."/>
            <person name="Mizuno T."/>
            <person name="Morinaga M."/>
            <person name="Sasaki M."/>
            <person name="Togashi T."/>
            <person name="Oyama M."/>
            <person name="Hata H."/>
            <person name="Watanabe M."/>
            <person name="Komatsu T."/>
            <person name="Mizushima-Sugano J."/>
            <person name="Satoh T."/>
            <person name="Shirai Y."/>
            <person name="Takahashi Y."/>
            <person name="Nakagawa K."/>
            <person name="Okumura K."/>
            <person name="Nagase T."/>
            <person name="Nomura N."/>
            <person name="Kikuchi H."/>
            <person name="Masuho Y."/>
            <person name="Yamashita R."/>
            <person name="Nakai K."/>
            <person name="Yada T."/>
            <person name="Nakamura Y."/>
            <person name="Ohara O."/>
            <person name="Isogai T."/>
            <person name="Sugano S."/>
        </authorList>
    </citation>
    <scope>NUCLEOTIDE SEQUENCE [LARGE SCALE MRNA]</scope>
    <source>
        <tissue>Hippocampus</tissue>
    </source>
</reference>
<reference key="6">
    <citation type="journal article" date="2006" name="Nature">
        <title>The DNA sequence and biological annotation of human chromosome 1.</title>
        <authorList>
            <person name="Gregory S.G."/>
            <person name="Barlow K.F."/>
            <person name="McLay K.E."/>
            <person name="Kaul R."/>
            <person name="Swarbreck D."/>
            <person name="Dunham A."/>
            <person name="Scott C.E."/>
            <person name="Howe K.L."/>
            <person name="Woodfine K."/>
            <person name="Spencer C.C.A."/>
            <person name="Jones M.C."/>
            <person name="Gillson C."/>
            <person name="Searle S."/>
            <person name="Zhou Y."/>
            <person name="Kokocinski F."/>
            <person name="McDonald L."/>
            <person name="Evans R."/>
            <person name="Phillips K."/>
            <person name="Atkinson A."/>
            <person name="Cooper R."/>
            <person name="Jones C."/>
            <person name="Hall R.E."/>
            <person name="Andrews T.D."/>
            <person name="Lloyd C."/>
            <person name="Ainscough R."/>
            <person name="Almeida J.P."/>
            <person name="Ambrose K.D."/>
            <person name="Anderson F."/>
            <person name="Andrew R.W."/>
            <person name="Ashwell R.I.S."/>
            <person name="Aubin K."/>
            <person name="Babbage A.K."/>
            <person name="Bagguley C.L."/>
            <person name="Bailey J."/>
            <person name="Beasley H."/>
            <person name="Bethel G."/>
            <person name="Bird C.P."/>
            <person name="Bray-Allen S."/>
            <person name="Brown J.Y."/>
            <person name="Brown A.J."/>
            <person name="Buckley D."/>
            <person name="Burton J."/>
            <person name="Bye J."/>
            <person name="Carder C."/>
            <person name="Chapman J.C."/>
            <person name="Clark S.Y."/>
            <person name="Clarke G."/>
            <person name="Clee C."/>
            <person name="Cobley V."/>
            <person name="Collier R.E."/>
            <person name="Corby N."/>
            <person name="Coville G.J."/>
            <person name="Davies J."/>
            <person name="Deadman R."/>
            <person name="Dunn M."/>
            <person name="Earthrowl M."/>
            <person name="Ellington A.G."/>
            <person name="Errington H."/>
            <person name="Frankish A."/>
            <person name="Frankland J."/>
            <person name="French L."/>
            <person name="Garner P."/>
            <person name="Garnett J."/>
            <person name="Gay L."/>
            <person name="Ghori M.R.J."/>
            <person name="Gibson R."/>
            <person name="Gilby L.M."/>
            <person name="Gillett W."/>
            <person name="Glithero R.J."/>
            <person name="Grafham D.V."/>
            <person name="Griffiths C."/>
            <person name="Griffiths-Jones S."/>
            <person name="Grocock R."/>
            <person name="Hammond S."/>
            <person name="Harrison E.S.I."/>
            <person name="Hart E."/>
            <person name="Haugen E."/>
            <person name="Heath P.D."/>
            <person name="Holmes S."/>
            <person name="Holt K."/>
            <person name="Howden P.J."/>
            <person name="Hunt A.R."/>
            <person name="Hunt S.E."/>
            <person name="Hunter G."/>
            <person name="Isherwood J."/>
            <person name="James R."/>
            <person name="Johnson C."/>
            <person name="Johnson D."/>
            <person name="Joy A."/>
            <person name="Kay M."/>
            <person name="Kershaw J.K."/>
            <person name="Kibukawa M."/>
            <person name="Kimberley A.M."/>
            <person name="King A."/>
            <person name="Knights A.J."/>
            <person name="Lad H."/>
            <person name="Laird G."/>
            <person name="Lawlor S."/>
            <person name="Leongamornlert D.A."/>
            <person name="Lloyd D.M."/>
            <person name="Loveland J."/>
            <person name="Lovell J."/>
            <person name="Lush M.J."/>
            <person name="Lyne R."/>
            <person name="Martin S."/>
            <person name="Mashreghi-Mohammadi M."/>
            <person name="Matthews L."/>
            <person name="Matthews N.S.W."/>
            <person name="McLaren S."/>
            <person name="Milne S."/>
            <person name="Mistry S."/>
            <person name="Moore M.J.F."/>
            <person name="Nickerson T."/>
            <person name="O'Dell C.N."/>
            <person name="Oliver K."/>
            <person name="Palmeiri A."/>
            <person name="Palmer S.A."/>
            <person name="Parker A."/>
            <person name="Patel D."/>
            <person name="Pearce A.V."/>
            <person name="Peck A.I."/>
            <person name="Pelan S."/>
            <person name="Phelps K."/>
            <person name="Phillimore B.J."/>
            <person name="Plumb R."/>
            <person name="Rajan J."/>
            <person name="Raymond C."/>
            <person name="Rouse G."/>
            <person name="Saenphimmachak C."/>
            <person name="Sehra H.K."/>
            <person name="Sheridan E."/>
            <person name="Shownkeen R."/>
            <person name="Sims S."/>
            <person name="Skuce C.D."/>
            <person name="Smith M."/>
            <person name="Steward C."/>
            <person name="Subramanian S."/>
            <person name="Sycamore N."/>
            <person name="Tracey A."/>
            <person name="Tromans A."/>
            <person name="Van Helmond Z."/>
            <person name="Wall M."/>
            <person name="Wallis J.M."/>
            <person name="White S."/>
            <person name="Whitehead S.L."/>
            <person name="Wilkinson J.E."/>
            <person name="Willey D.L."/>
            <person name="Williams H."/>
            <person name="Wilming L."/>
            <person name="Wray P.W."/>
            <person name="Wu Z."/>
            <person name="Coulson A."/>
            <person name="Vaudin M."/>
            <person name="Sulston J.E."/>
            <person name="Durbin R.M."/>
            <person name="Hubbard T."/>
            <person name="Wooster R."/>
            <person name="Dunham I."/>
            <person name="Carter N.P."/>
            <person name="McVean G."/>
            <person name="Ross M.T."/>
            <person name="Harrow J."/>
            <person name="Olson M.V."/>
            <person name="Beck S."/>
            <person name="Rogers J."/>
            <person name="Bentley D.R."/>
        </authorList>
    </citation>
    <scope>NUCLEOTIDE SEQUENCE [LARGE SCALE GENOMIC DNA]</scope>
</reference>
<reference key="7">
    <citation type="submission" date="2005-09" db="EMBL/GenBank/DDBJ databases">
        <authorList>
            <person name="Mural R.J."/>
            <person name="Istrail S."/>
            <person name="Sutton G.G."/>
            <person name="Florea L."/>
            <person name="Halpern A.L."/>
            <person name="Mobarry C.M."/>
            <person name="Lippert R."/>
            <person name="Walenz B."/>
            <person name="Shatkay H."/>
            <person name="Dew I."/>
            <person name="Miller J.R."/>
            <person name="Flanigan M.J."/>
            <person name="Edwards N.J."/>
            <person name="Bolanos R."/>
            <person name="Fasulo D."/>
            <person name="Halldorsson B.V."/>
            <person name="Hannenhalli S."/>
            <person name="Turner R."/>
            <person name="Yooseph S."/>
            <person name="Lu F."/>
            <person name="Nusskern D.R."/>
            <person name="Shue B.C."/>
            <person name="Zheng X.H."/>
            <person name="Zhong F."/>
            <person name="Delcher A.L."/>
            <person name="Huson D.H."/>
            <person name="Kravitz S.A."/>
            <person name="Mouchard L."/>
            <person name="Reinert K."/>
            <person name="Remington K.A."/>
            <person name="Clark A.G."/>
            <person name="Waterman M.S."/>
            <person name="Eichler E.E."/>
            <person name="Adams M.D."/>
            <person name="Hunkapiller M.W."/>
            <person name="Myers E.W."/>
            <person name="Venter J.C."/>
        </authorList>
    </citation>
    <scope>NUCLEOTIDE SEQUENCE [LARGE SCALE GENOMIC DNA]</scope>
</reference>
<reference key="8">
    <citation type="journal article" date="2004" name="Genome Res.">
        <title>The status, quality, and expansion of the NIH full-length cDNA project: the Mammalian Gene Collection (MGC).</title>
        <authorList>
            <consortium name="The MGC Project Team"/>
        </authorList>
    </citation>
    <scope>NUCLEOTIDE SEQUENCE [LARGE SCALE MRNA]</scope>
    <source>
        <tissue>Liver</tissue>
    </source>
</reference>
<reference key="9">
    <citation type="journal article" date="1988" name="Biochem. J.">
        <title>Characterization and amino acid sequence of a fatty acid-binding protein from human heart.</title>
        <authorList>
            <person name="Offner G.D."/>
            <person name="Brecher P."/>
            <person name="Sawlivich W.B."/>
            <person name="Costello C.E."/>
            <person name="Troxler R.F."/>
        </authorList>
    </citation>
    <scope>PROTEIN SEQUENCE OF 2-133</scope>
</reference>
<reference key="10">
    <citation type="journal article" date="1990" name="Mol. Cell. Biochem.">
        <title>Revision of the amino acid sequence of human heart fatty acid-binding protein.</title>
        <authorList>
            <person name="Boerchers T."/>
            <person name="Hoejrup P."/>
            <person name="Nielsen S.U."/>
            <person name="Roepstorff P."/>
            <person name="Spener F."/>
            <person name="Knudsen J."/>
        </authorList>
    </citation>
    <scope>PROTEIN SEQUENCE OF 2-133</scope>
    <scope>SEQUENCE REVISION</scope>
</reference>
<reference key="11">
    <citation type="journal article" date="1993" name="Hum. Genet.">
        <title>Localization of the gene for human heart fatty acid binding protein to chromosome 1p32-1p33.</title>
        <authorList>
            <person name="Troxler R.F."/>
            <person name="Offner G.D."/>
            <person name="Jiang J.W."/>
            <person name="Wu B.L."/>
            <person name="Skare J.C."/>
            <person name="Milunsky A."/>
            <person name="Wyandt H.E."/>
        </authorList>
    </citation>
    <scope>NUCLEOTIDE SEQUENCE [MRNA] OF 15-133</scope>
    <source>
        <tissue>Heart</tissue>
    </source>
</reference>
<reference key="12">
    <citation type="submission" date="2008-12" db="UniProtKB">
        <authorList>
            <person name="Lubec G."/>
            <person name="Chen W.-Q."/>
            <person name="Sun Y."/>
        </authorList>
    </citation>
    <scope>PROTEIN SEQUENCE OF 23-31; 46-53; 67-80; 98-107 AND 114-127</scope>
    <scope>IDENTIFICATION BY MASS SPECTROMETRY</scope>
    <source>
        <tissue>Fetal brain cortex</tissue>
    </source>
</reference>
<reference key="13">
    <citation type="journal article" date="1995" name="Electrophoresis">
        <title>The major protein expression profile and two-dimensional protein database of human heart.</title>
        <authorList>
            <person name="Kovalyov L.I."/>
            <person name="Shishkin S.S."/>
            <person name="Efimochkin A.S."/>
            <person name="Kovalyova M.A."/>
            <person name="Ershova E.S."/>
            <person name="Egorov T.A."/>
            <person name="Musalyamov A.K."/>
        </authorList>
    </citation>
    <scope>PROTEIN SEQUENCE OF 32-39</scope>
    <source>
        <tissue>Heart</tissue>
    </source>
</reference>
<reference key="14">
    <citation type="journal article" date="2012" name="Mol. Cell. Proteomics">
        <title>Comparative large-scale characterisation of plant vs. mammal proteins reveals similar and idiosyncratic N-alpha acetylation features.</title>
        <authorList>
            <person name="Bienvenut W.V."/>
            <person name="Sumpton D."/>
            <person name="Martinez A."/>
            <person name="Lilla S."/>
            <person name="Espagne C."/>
            <person name="Meinnel T."/>
            <person name="Giglione C."/>
        </authorList>
    </citation>
    <scope>ACETYLATION [LARGE SCALE ANALYSIS] AT VAL-2</scope>
    <scope>CLEAVAGE OF INITIATOR METHIONINE [LARGE SCALE ANALYSIS]</scope>
    <scope>IDENTIFICATION BY MASS SPECTROMETRY [LARGE SCALE ANALYSIS]</scope>
</reference>
<reference evidence="10" key="15">
    <citation type="journal article" date="1992" name="J. Biol. Chem.">
        <title>Three-dimensional structure of recombinant human muscle fatty acid-binding protein.</title>
        <authorList>
            <person name="Zanotti G."/>
            <person name="Scapin G."/>
            <person name="Spadon P."/>
            <person name="Veerkamp J.H."/>
            <person name="Sacchettini J.C."/>
        </authorList>
    </citation>
    <scope>X-RAY CRYSTALLOGRAPHY (2.1 ANGSTROMS) IN COMPLEX WITH PALMITATE</scope>
</reference>
<reference evidence="7 8 9" key="16">
    <citation type="journal article" date="1994" name="Structure">
        <title>Structural studies on human muscle fatty acid binding protein at 1.4-A resolution: binding interactions with three C18 fatty acids.</title>
        <authorList>
            <person name="Young A.C.M."/>
            <person name="Scapin G."/>
            <person name="Kromminga A."/>
            <person name="Patel S.B."/>
            <person name="Veerkamp J.H."/>
            <person name="Sacchettini J.C."/>
        </authorList>
    </citation>
    <scope>X-RAY CRYSTALLOGRAPHY (1.4 ANGSTROMS) IN COMPLEXES WITH C18 FATTY ACIDS</scope>
</reference>
<reference key="17">
    <citation type="journal article" date="2001" name="Biochem. J.">
        <title>Spin-system heterogeneities indicate a selected-fit mechanism in fatty acid binding to heart-type fatty acid-binding protein (H-FABP).</title>
        <authorList>
            <person name="Luecke C."/>
            <person name="Rademacher M."/>
            <person name="Zimmerman A.W."/>
            <person name="van Moerkerk H.T.B."/>
            <person name="Veerkamp J.H."/>
            <person name="Rueterjans H."/>
        </authorList>
    </citation>
    <scope>STRUCTURE BY NMR</scope>
</reference>
<proteinExistence type="evidence at protein level"/>
<dbReference type="EMBL" id="X56549">
    <property type="protein sequence ID" value="CAA39889.1"/>
    <property type="molecule type" value="mRNA"/>
</dbReference>
<dbReference type="EMBL" id="Y10255">
    <property type="protein sequence ID" value="CAA71305.1"/>
    <property type="molecule type" value="mRNA"/>
</dbReference>
<dbReference type="EMBL" id="U57623">
    <property type="protein sequence ID" value="AAB02555.1"/>
    <property type="molecule type" value="Genomic_DNA"/>
</dbReference>
<dbReference type="EMBL" id="AK314122">
    <property type="protein sequence ID" value="BAG36813.1"/>
    <property type="molecule type" value="mRNA"/>
</dbReference>
<dbReference type="EMBL" id="U17081">
    <property type="protein sequence ID" value="AAC99800.1"/>
    <property type="molecule type" value="Genomic_DNA"/>
</dbReference>
<dbReference type="EMBL" id="S67314">
    <property type="protein sequence ID" value="AAB29294.1"/>
    <property type="molecule type" value="mRNA"/>
</dbReference>
<dbReference type="EMBL" id="BT006727">
    <property type="protein sequence ID" value="AAP35373.1"/>
    <property type="molecule type" value="mRNA"/>
</dbReference>
<dbReference type="EMBL" id="AL451070">
    <property type="status" value="NOT_ANNOTATED_CDS"/>
    <property type="molecule type" value="Genomic_DNA"/>
</dbReference>
<dbReference type="EMBL" id="CH471059">
    <property type="protein sequence ID" value="EAX07619.1"/>
    <property type="molecule type" value="Genomic_DNA"/>
</dbReference>
<dbReference type="EMBL" id="BC007021">
    <property type="protein sequence ID" value="AAH07021.1"/>
    <property type="molecule type" value="mRNA"/>
</dbReference>
<dbReference type="CCDS" id="CCDS342.1"/>
<dbReference type="PIR" id="S15432">
    <property type="entry name" value="FZHUC"/>
</dbReference>
<dbReference type="RefSeq" id="NP_004093.1">
    <property type="nucleotide sequence ID" value="NM_004102.5"/>
</dbReference>
<dbReference type="PDB" id="1G5W">
    <property type="method" value="NMR"/>
    <property type="chains" value="A=2-133"/>
</dbReference>
<dbReference type="PDB" id="1HMR">
    <property type="method" value="X-ray"/>
    <property type="resolution" value="1.40 A"/>
    <property type="chains" value="A=2-133"/>
</dbReference>
<dbReference type="PDB" id="1HMS">
    <property type="method" value="X-ray"/>
    <property type="resolution" value="1.40 A"/>
    <property type="chains" value="A=2-133"/>
</dbReference>
<dbReference type="PDB" id="1HMT">
    <property type="method" value="X-ray"/>
    <property type="resolution" value="1.40 A"/>
    <property type="chains" value="A=2-133"/>
</dbReference>
<dbReference type="PDB" id="2HMB">
    <property type="method" value="X-ray"/>
    <property type="resolution" value="2.10 A"/>
    <property type="chains" value="A=2-133"/>
</dbReference>
<dbReference type="PDB" id="3RSW">
    <property type="method" value="X-ray"/>
    <property type="resolution" value="2.60 A"/>
    <property type="chains" value="A/B=1-133"/>
</dbReference>
<dbReference type="PDB" id="3WBG">
    <property type="method" value="X-ray"/>
    <property type="resolution" value="2.15 A"/>
    <property type="chains" value="A/B/C/D=1-133"/>
</dbReference>
<dbReference type="PDB" id="3WVM">
    <property type="method" value="X-ray"/>
    <property type="resolution" value="0.88 A"/>
    <property type="chains" value="A=1-133"/>
</dbReference>
<dbReference type="PDB" id="3WXQ">
    <property type="method" value="X-ray"/>
    <property type="resolution" value="1.60 A"/>
    <property type="chains" value="A=1-133"/>
</dbReference>
<dbReference type="PDB" id="4TJZ">
    <property type="method" value="X-ray"/>
    <property type="resolution" value="0.87 A"/>
    <property type="chains" value="A=1-133"/>
</dbReference>
<dbReference type="PDB" id="4TKB">
    <property type="method" value="X-ray"/>
    <property type="resolution" value="0.86 A"/>
    <property type="chains" value="A=1-133"/>
</dbReference>
<dbReference type="PDB" id="4TKH">
    <property type="method" value="X-ray"/>
    <property type="resolution" value="0.93 A"/>
    <property type="chains" value="A=1-133"/>
</dbReference>
<dbReference type="PDB" id="4TKJ">
    <property type="method" value="X-ray"/>
    <property type="resolution" value="0.87 A"/>
    <property type="chains" value="A=1-133"/>
</dbReference>
<dbReference type="PDB" id="4WBK">
    <property type="method" value="X-ray"/>
    <property type="resolution" value="1.37 A"/>
    <property type="chains" value="A=1-133"/>
</dbReference>
<dbReference type="PDB" id="5B27">
    <property type="method" value="X-ray"/>
    <property type="resolution" value="1.02 A"/>
    <property type="chains" value="A=1-133"/>
</dbReference>
<dbReference type="PDB" id="5B28">
    <property type="method" value="X-ray"/>
    <property type="resolution" value="0.90 A"/>
    <property type="chains" value="A=1-133"/>
</dbReference>
<dbReference type="PDB" id="5B29">
    <property type="method" value="X-ray"/>
    <property type="resolution" value="1.28 A"/>
    <property type="chains" value="A=2-133"/>
</dbReference>
<dbReference type="PDB" id="5CE4">
    <property type="method" value="Other"/>
    <property type="resolution" value="0.98 A"/>
    <property type="chains" value="A=1-132"/>
</dbReference>
<dbReference type="PDB" id="5HZ9">
    <property type="method" value="X-ray"/>
    <property type="resolution" value="2.30 A"/>
    <property type="chains" value="A/B/C/D/E/F/G/H=1-133"/>
</dbReference>
<dbReference type="PDB" id="6AQ1">
    <property type="method" value="X-ray"/>
    <property type="resolution" value="1.40 A"/>
    <property type="chains" value="A/B=1-133"/>
</dbReference>
<dbReference type="PDB" id="7EGO">
    <property type="method" value="X-ray"/>
    <property type="resolution" value="1.21 A"/>
    <property type="chains" value="A=1-133"/>
</dbReference>
<dbReference type="PDB" id="7EUV">
    <property type="method" value="X-ray"/>
    <property type="resolution" value="1.28 A"/>
    <property type="chains" value="A=1-133"/>
</dbReference>
<dbReference type="PDB" id="7EUW">
    <property type="method" value="X-ray"/>
    <property type="resolution" value="1.55 A"/>
    <property type="chains" value="A=1-133"/>
</dbReference>
<dbReference type="PDB" id="7FBF">
    <property type="method" value="X-ray"/>
    <property type="resolution" value="0.86 A"/>
    <property type="chains" value="A=1-133"/>
</dbReference>
<dbReference type="PDB" id="7FBM">
    <property type="method" value="X-ray"/>
    <property type="resolution" value="1.00 A"/>
    <property type="chains" value="A=1-133"/>
</dbReference>
<dbReference type="PDB" id="7FBN">
    <property type="method" value="X-ray"/>
    <property type="resolution" value="1.44 A"/>
    <property type="chains" value="A=1-133"/>
</dbReference>
<dbReference type="PDB" id="7FC4">
    <property type="method" value="X-ray"/>
    <property type="resolution" value="1.50 A"/>
    <property type="chains" value="A=1-133"/>
</dbReference>
<dbReference type="PDB" id="7FCG">
    <property type="method" value="X-ray"/>
    <property type="resolution" value="1.19 A"/>
    <property type="chains" value="A=1-133"/>
</dbReference>
<dbReference type="PDB" id="7FCX">
    <property type="method" value="X-ray"/>
    <property type="resolution" value="1.15 A"/>
    <property type="chains" value="A=1-133"/>
</dbReference>
<dbReference type="PDB" id="7FD7">
    <property type="method" value="X-ray"/>
    <property type="resolution" value="1.00 A"/>
    <property type="chains" value="A=1-133"/>
</dbReference>
<dbReference type="PDB" id="7FDT">
    <property type="method" value="X-ray"/>
    <property type="resolution" value="0.86 A"/>
    <property type="chains" value="A=1-133"/>
</dbReference>
<dbReference type="PDB" id="7FDU">
    <property type="method" value="X-ray"/>
    <property type="resolution" value="0.86 A"/>
    <property type="chains" value="A=1-133"/>
</dbReference>
<dbReference type="PDB" id="7FDX">
    <property type="method" value="X-ray"/>
    <property type="resolution" value="0.95 A"/>
    <property type="chains" value="A=1-133"/>
</dbReference>
<dbReference type="PDB" id="7FEK">
    <property type="method" value="X-ray"/>
    <property type="resolution" value="1.05 A"/>
    <property type="chains" value="A=1-133"/>
</dbReference>
<dbReference type="PDB" id="7FEU">
    <property type="method" value="X-ray"/>
    <property type="resolution" value="0.95 A"/>
    <property type="chains" value="A=1-133"/>
</dbReference>
<dbReference type="PDB" id="7FEZ">
    <property type="method" value="X-ray"/>
    <property type="resolution" value="0.76 A"/>
    <property type="chains" value="A=1-133"/>
</dbReference>
<dbReference type="PDB" id="7FF6">
    <property type="method" value="X-ray"/>
    <property type="resolution" value="0.83 A"/>
    <property type="chains" value="A=1-133"/>
</dbReference>
<dbReference type="PDB" id="7FFK">
    <property type="method" value="X-ray"/>
    <property type="resolution" value="0.84 A"/>
    <property type="chains" value="A=1-133"/>
</dbReference>
<dbReference type="PDB" id="7FFX">
    <property type="method" value="X-ray"/>
    <property type="resolution" value="0.88 A"/>
    <property type="chains" value="A=1-133"/>
</dbReference>
<dbReference type="PDB" id="7FG1">
    <property type="method" value="X-ray"/>
    <property type="resolution" value="0.93 A"/>
    <property type="chains" value="A=1-133"/>
</dbReference>
<dbReference type="PDB" id="7FG5">
    <property type="method" value="X-ray"/>
    <property type="resolution" value="1.30 A"/>
    <property type="chains" value="A=1-133"/>
</dbReference>
<dbReference type="PDB" id="7FZQ">
    <property type="method" value="X-ray"/>
    <property type="resolution" value="1.60 A"/>
    <property type="chains" value="A/B=1-133"/>
</dbReference>
<dbReference type="PDB" id="7V2G">
    <property type="method" value="X-ray"/>
    <property type="resolution" value="0.98 A"/>
    <property type="chains" value="A=1-133"/>
</dbReference>
<dbReference type="PDB" id="7V5U">
    <property type="method" value="X-ray"/>
    <property type="resolution" value="0.92 A"/>
    <property type="chains" value="A=1-133"/>
</dbReference>
<dbReference type="PDB" id="7VB1">
    <property type="method" value="X-ray"/>
    <property type="resolution" value="0.90 A"/>
    <property type="chains" value="A=1-133"/>
</dbReference>
<dbReference type="PDB" id="7WCI">
    <property type="method" value="X-ray"/>
    <property type="resolution" value="0.85 A"/>
    <property type="chains" value="A=1-133"/>
</dbReference>
<dbReference type="PDB" id="7WD6">
    <property type="method" value="X-ray"/>
    <property type="resolution" value="0.95 A"/>
    <property type="chains" value="A=1-133"/>
</dbReference>
<dbReference type="PDB" id="7WDJ">
    <property type="method" value="X-ray"/>
    <property type="resolution" value="0.90 A"/>
    <property type="chains" value="A=1-133"/>
</dbReference>
<dbReference type="PDB" id="7WE5">
    <property type="method" value="X-ray"/>
    <property type="resolution" value="0.87 A"/>
    <property type="chains" value="A=1-133"/>
</dbReference>
<dbReference type="PDB" id="7WF0">
    <property type="method" value="X-ray"/>
    <property type="resolution" value="0.83 A"/>
    <property type="chains" value="A=1-133"/>
</dbReference>
<dbReference type="PDB" id="7WJ1">
    <property type="method" value="X-ray"/>
    <property type="resolution" value="0.86 A"/>
    <property type="chains" value="A=1-133"/>
</dbReference>
<dbReference type="PDB" id="7WKB">
    <property type="method" value="X-ray"/>
    <property type="resolution" value="0.81 A"/>
    <property type="chains" value="A=1-133"/>
</dbReference>
<dbReference type="PDB" id="7WKG">
    <property type="method" value="X-ray"/>
    <property type="resolution" value="0.84 A"/>
    <property type="chains" value="A=1-133"/>
</dbReference>
<dbReference type="PDB" id="7WOM">
    <property type="method" value="X-ray"/>
    <property type="resolution" value="0.90 A"/>
    <property type="chains" value="A=1-133"/>
</dbReference>
<dbReference type="PDB" id="7WPG">
    <property type="method" value="X-ray"/>
    <property type="resolution" value="0.90 A"/>
    <property type="chains" value="A=1-133"/>
</dbReference>
<dbReference type="PDB" id="7WPU">
    <property type="method" value="X-ray"/>
    <property type="resolution" value="0.95 A"/>
    <property type="chains" value="A=1-133"/>
</dbReference>
<dbReference type="PDB" id="7WPW">
    <property type="method" value="X-ray"/>
    <property type="resolution" value="0.97 A"/>
    <property type="chains" value="A=1-133"/>
</dbReference>
<dbReference type="PDB" id="7WQ7">
    <property type="method" value="X-ray"/>
    <property type="resolution" value="0.87 A"/>
    <property type="chains" value="A=1-133"/>
</dbReference>
<dbReference type="PDB" id="7X48">
    <property type="method" value="X-ray"/>
    <property type="resolution" value="0.86 A"/>
    <property type="chains" value="A=1-133"/>
</dbReference>
<dbReference type="PDB" id="7X4J">
    <property type="method" value="X-ray"/>
    <property type="resolution" value="0.96 A"/>
    <property type="chains" value="A=1-133"/>
</dbReference>
<dbReference type="PDB" id="7X50">
    <property type="method" value="X-ray"/>
    <property type="resolution" value="0.93 A"/>
    <property type="chains" value="A=1-133"/>
</dbReference>
<dbReference type="PDB" id="7XBC">
    <property type="method" value="X-ray"/>
    <property type="resolution" value="0.92 A"/>
    <property type="chains" value="A=1-133"/>
</dbReference>
<dbReference type="PDB" id="7XHM">
    <property type="method" value="X-ray"/>
    <property type="resolution" value="0.88 A"/>
    <property type="chains" value="A=1-133"/>
</dbReference>
<dbReference type="PDB" id="7XHU">
    <property type="method" value="X-ray"/>
    <property type="resolution" value="0.88 A"/>
    <property type="chains" value="A=1-133"/>
</dbReference>
<dbReference type="PDB" id="8GEW">
    <property type="method" value="X-ray"/>
    <property type="resolution" value="0.97 A"/>
    <property type="chains" value="A=1-132"/>
</dbReference>
<dbReference type="PDBsum" id="1G5W"/>
<dbReference type="PDBsum" id="1HMR"/>
<dbReference type="PDBsum" id="1HMS"/>
<dbReference type="PDBsum" id="1HMT"/>
<dbReference type="PDBsum" id="2HMB"/>
<dbReference type="PDBsum" id="3RSW"/>
<dbReference type="PDBsum" id="3WBG"/>
<dbReference type="PDBsum" id="3WVM"/>
<dbReference type="PDBsum" id="3WXQ"/>
<dbReference type="PDBsum" id="4TJZ"/>
<dbReference type="PDBsum" id="4TKB"/>
<dbReference type="PDBsum" id="4TKH"/>
<dbReference type="PDBsum" id="4TKJ"/>
<dbReference type="PDBsum" id="4WBK"/>
<dbReference type="PDBsum" id="5B27"/>
<dbReference type="PDBsum" id="5B28"/>
<dbReference type="PDBsum" id="5B29"/>
<dbReference type="PDBsum" id="5CE4"/>
<dbReference type="PDBsum" id="5HZ9"/>
<dbReference type="PDBsum" id="6AQ1"/>
<dbReference type="PDBsum" id="7EGO"/>
<dbReference type="PDBsum" id="7EUV"/>
<dbReference type="PDBsum" id="7EUW"/>
<dbReference type="PDBsum" id="7FBF"/>
<dbReference type="PDBsum" id="7FBM"/>
<dbReference type="PDBsum" id="7FBN"/>
<dbReference type="PDBsum" id="7FC4"/>
<dbReference type="PDBsum" id="7FCG"/>
<dbReference type="PDBsum" id="7FCX"/>
<dbReference type="PDBsum" id="7FD7"/>
<dbReference type="PDBsum" id="7FDT"/>
<dbReference type="PDBsum" id="7FDU"/>
<dbReference type="PDBsum" id="7FDX"/>
<dbReference type="PDBsum" id="7FEK"/>
<dbReference type="PDBsum" id="7FEU"/>
<dbReference type="PDBsum" id="7FEZ"/>
<dbReference type="PDBsum" id="7FF6"/>
<dbReference type="PDBsum" id="7FFK"/>
<dbReference type="PDBsum" id="7FFX"/>
<dbReference type="PDBsum" id="7FG1"/>
<dbReference type="PDBsum" id="7FG5"/>
<dbReference type="PDBsum" id="7FZQ"/>
<dbReference type="PDBsum" id="7V2G"/>
<dbReference type="PDBsum" id="7V5U"/>
<dbReference type="PDBsum" id="7VB1"/>
<dbReference type="PDBsum" id="7WCI"/>
<dbReference type="PDBsum" id="7WD6"/>
<dbReference type="PDBsum" id="7WDJ"/>
<dbReference type="PDBsum" id="7WE5"/>
<dbReference type="PDBsum" id="7WF0"/>
<dbReference type="PDBsum" id="7WJ1"/>
<dbReference type="PDBsum" id="7WKB"/>
<dbReference type="PDBsum" id="7WKG"/>
<dbReference type="PDBsum" id="7WOM"/>
<dbReference type="PDBsum" id="7WPG"/>
<dbReference type="PDBsum" id="7WPU"/>
<dbReference type="PDBsum" id="7WPW"/>
<dbReference type="PDBsum" id="7WQ7"/>
<dbReference type="PDBsum" id="7X48"/>
<dbReference type="PDBsum" id="7X4J"/>
<dbReference type="PDBsum" id="7X50"/>
<dbReference type="PDBsum" id="7XBC"/>
<dbReference type="PDBsum" id="7XHM"/>
<dbReference type="PDBsum" id="7XHU"/>
<dbReference type="PDBsum" id="8GEW"/>
<dbReference type="SMR" id="P05413"/>
<dbReference type="BioGRID" id="108468">
    <property type="interactions" value="42"/>
</dbReference>
<dbReference type="FunCoup" id="P05413">
    <property type="interactions" value="316"/>
</dbReference>
<dbReference type="IntAct" id="P05413">
    <property type="interactions" value="14"/>
</dbReference>
<dbReference type="MINT" id="P05413"/>
<dbReference type="STRING" id="9606.ENSP00000362817"/>
<dbReference type="BindingDB" id="P05413"/>
<dbReference type="ChEMBL" id="CHEMBL3344"/>
<dbReference type="DrugBank" id="DB04224">
    <property type="generic name" value="Oleic Acid"/>
</dbReference>
<dbReference type="DrugBank" id="DB03796">
    <property type="generic name" value="Palmitic Acid"/>
</dbReference>
<dbReference type="DrugBank" id="DB03193">
    <property type="generic name" value="Stearic acid"/>
</dbReference>
<dbReference type="DrugCentral" id="P05413"/>
<dbReference type="GuidetoPHARMACOLOGY" id="2533"/>
<dbReference type="SwissLipids" id="SLP:000001521"/>
<dbReference type="CarbonylDB" id="P05413"/>
<dbReference type="iPTMnet" id="P05413"/>
<dbReference type="PhosphoSitePlus" id="P05413"/>
<dbReference type="SwissPalm" id="P05413"/>
<dbReference type="BioMuta" id="FABP3"/>
<dbReference type="DMDM" id="119802"/>
<dbReference type="REPRODUCTION-2DPAGE" id="IPI00219684"/>
<dbReference type="jPOST" id="P05413"/>
<dbReference type="MassIVE" id="P05413"/>
<dbReference type="PaxDb" id="9606-ENSP00000362817"/>
<dbReference type="PeptideAtlas" id="P05413"/>
<dbReference type="ProteomicsDB" id="51837"/>
<dbReference type="Pumba" id="P05413"/>
<dbReference type="Antibodypedia" id="4505">
    <property type="antibodies" value="1241 antibodies from 42 providers"/>
</dbReference>
<dbReference type="DNASU" id="2170"/>
<dbReference type="Ensembl" id="ENST00000373713.7">
    <property type="protein sequence ID" value="ENSP00000362817.2"/>
    <property type="gene ID" value="ENSG00000121769.8"/>
</dbReference>
<dbReference type="GeneID" id="2170"/>
<dbReference type="KEGG" id="hsa:2170"/>
<dbReference type="MANE-Select" id="ENST00000373713.7">
    <property type="protein sequence ID" value="ENSP00000362817.2"/>
    <property type="RefSeq nucleotide sequence ID" value="NM_004102.5"/>
    <property type="RefSeq protein sequence ID" value="NP_004093.1"/>
</dbReference>
<dbReference type="UCSC" id="uc001bss.2">
    <property type="organism name" value="human"/>
</dbReference>
<dbReference type="AGR" id="HGNC:3557"/>
<dbReference type="CTD" id="2170"/>
<dbReference type="DisGeNET" id="2170"/>
<dbReference type="GeneCards" id="FABP3"/>
<dbReference type="HGNC" id="HGNC:3557">
    <property type="gene designation" value="FABP3"/>
</dbReference>
<dbReference type="HPA" id="ENSG00000121769">
    <property type="expression patterns" value="Group enriched (heart muscle, skeletal muscle, tongue)"/>
</dbReference>
<dbReference type="MalaCards" id="FABP3"/>
<dbReference type="MIM" id="134651">
    <property type="type" value="gene"/>
</dbReference>
<dbReference type="neXtProt" id="NX_P05413"/>
<dbReference type="OpenTargets" id="ENSG00000121769"/>
<dbReference type="PharmGKB" id="PA27958"/>
<dbReference type="VEuPathDB" id="HostDB:ENSG00000121769"/>
<dbReference type="eggNOG" id="KOG4015">
    <property type="taxonomic scope" value="Eukaryota"/>
</dbReference>
<dbReference type="GeneTree" id="ENSGT00940000155104"/>
<dbReference type="InParanoid" id="P05413"/>
<dbReference type="OMA" id="NTEINCK"/>
<dbReference type="OrthoDB" id="354351at2759"/>
<dbReference type="PAN-GO" id="P05413">
    <property type="GO annotations" value="4 GO annotations based on evolutionary models"/>
</dbReference>
<dbReference type="PhylomeDB" id="P05413"/>
<dbReference type="TreeFam" id="TF316894"/>
<dbReference type="PathwayCommons" id="P05413"/>
<dbReference type="Reactome" id="R-HSA-163560">
    <property type="pathway name" value="Triglyceride catabolism"/>
</dbReference>
<dbReference type="SignaLink" id="P05413"/>
<dbReference type="SIGNOR" id="P05413"/>
<dbReference type="BioGRID-ORCS" id="2170">
    <property type="hits" value="16 hits in 1139 CRISPR screens"/>
</dbReference>
<dbReference type="CD-CODE" id="FB4E32DD">
    <property type="entry name" value="Presynaptic clusters and postsynaptic densities"/>
</dbReference>
<dbReference type="ChiTaRS" id="FABP3">
    <property type="organism name" value="human"/>
</dbReference>
<dbReference type="EvolutionaryTrace" id="P05413"/>
<dbReference type="GeneWiki" id="Heart-type_fatty_acid_binding_protein"/>
<dbReference type="GenomeRNAi" id="2170"/>
<dbReference type="Pharos" id="P05413">
    <property type="development level" value="Tchem"/>
</dbReference>
<dbReference type="PRO" id="PR:P05413"/>
<dbReference type="Proteomes" id="UP000005640">
    <property type="component" value="Chromosome 1"/>
</dbReference>
<dbReference type="RNAct" id="P05413">
    <property type="molecule type" value="protein"/>
</dbReference>
<dbReference type="Bgee" id="ENSG00000121769">
    <property type="expression patterns" value="Expressed in apex of heart and 165 other cell types or tissues"/>
</dbReference>
<dbReference type="ExpressionAtlas" id="P05413">
    <property type="expression patterns" value="baseline and differential"/>
</dbReference>
<dbReference type="GO" id="GO:0005829">
    <property type="term" value="C:cytosol"/>
    <property type="evidence" value="ECO:0000318"/>
    <property type="project" value="GO_Central"/>
</dbReference>
<dbReference type="GO" id="GO:0070062">
    <property type="term" value="C:extracellular exosome"/>
    <property type="evidence" value="ECO:0007005"/>
    <property type="project" value="UniProtKB"/>
</dbReference>
<dbReference type="GO" id="GO:0005615">
    <property type="term" value="C:extracellular space"/>
    <property type="evidence" value="ECO:0000314"/>
    <property type="project" value="BHF-UCL"/>
</dbReference>
<dbReference type="GO" id="GO:0005634">
    <property type="term" value="C:nucleus"/>
    <property type="evidence" value="ECO:0000318"/>
    <property type="project" value="GO_Central"/>
</dbReference>
<dbReference type="GO" id="GO:0016528">
    <property type="term" value="C:sarcoplasm"/>
    <property type="evidence" value="ECO:0007669"/>
    <property type="project" value="Ensembl"/>
</dbReference>
<dbReference type="GO" id="GO:0008092">
    <property type="term" value="F:cytoskeletal protein binding"/>
    <property type="evidence" value="ECO:0000353"/>
    <property type="project" value="UniProtKB"/>
</dbReference>
<dbReference type="GO" id="GO:0050543">
    <property type="term" value="F:icosatetraenoic acid binding"/>
    <property type="evidence" value="ECO:0007669"/>
    <property type="project" value="Ensembl"/>
</dbReference>
<dbReference type="GO" id="GO:0036041">
    <property type="term" value="F:long-chain fatty acid binding"/>
    <property type="evidence" value="ECO:0000314"/>
    <property type="project" value="BHF-UCL"/>
</dbReference>
<dbReference type="GO" id="GO:0005324">
    <property type="term" value="F:long-chain fatty acid transmembrane transporter activity"/>
    <property type="evidence" value="ECO:0007669"/>
    <property type="project" value="Ensembl"/>
</dbReference>
<dbReference type="GO" id="GO:0070538">
    <property type="term" value="F:oleic acid binding"/>
    <property type="evidence" value="ECO:0000314"/>
    <property type="project" value="BHF-UCL"/>
</dbReference>
<dbReference type="GO" id="GO:0050873">
    <property type="term" value="P:brown fat cell differentiation"/>
    <property type="evidence" value="ECO:0007669"/>
    <property type="project" value="Ensembl"/>
</dbReference>
<dbReference type="GO" id="GO:0042632">
    <property type="term" value="P:cholesterol homeostasis"/>
    <property type="evidence" value="ECO:0000250"/>
    <property type="project" value="BHF-UCL"/>
</dbReference>
<dbReference type="GO" id="GO:0006631">
    <property type="term" value="P:fatty acid metabolic process"/>
    <property type="evidence" value="ECO:0007669"/>
    <property type="project" value="Ensembl"/>
</dbReference>
<dbReference type="GO" id="GO:0032365">
    <property type="term" value="P:intracellular lipid transport"/>
    <property type="evidence" value="ECO:0000250"/>
    <property type="project" value="BHF-UCL"/>
</dbReference>
<dbReference type="GO" id="GO:0015909">
    <property type="term" value="P:long-chain fatty acid transport"/>
    <property type="evidence" value="ECO:0000250"/>
    <property type="project" value="ARUK-UCL"/>
</dbReference>
<dbReference type="GO" id="GO:0008285">
    <property type="term" value="P:negative regulation of cell population proliferation"/>
    <property type="evidence" value="ECO:0000304"/>
    <property type="project" value="ProtInc"/>
</dbReference>
<dbReference type="GO" id="GO:0055091">
    <property type="term" value="P:phospholipid homeostasis"/>
    <property type="evidence" value="ECO:0000250"/>
    <property type="project" value="BHF-UCL"/>
</dbReference>
<dbReference type="GO" id="GO:0140214">
    <property type="term" value="P:positive regulation of long-chain fatty acid import into cell"/>
    <property type="evidence" value="ECO:0000250"/>
    <property type="project" value="ARUK-UCL"/>
</dbReference>
<dbReference type="GO" id="GO:0071073">
    <property type="term" value="P:positive regulation of phospholipid biosynthetic process"/>
    <property type="evidence" value="ECO:0000305"/>
    <property type="project" value="BHF-UCL"/>
</dbReference>
<dbReference type="GO" id="GO:0046320">
    <property type="term" value="P:regulation of fatty acid oxidation"/>
    <property type="evidence" value="ECO:0000250"/>
    <property type="project" value="BHF-UCL"/>
</dbReference>
<dbReference type="GO" id="GO:2001245">
    <property type="term" value="P:regulation of phosphatidylcholine biosynthetic process"/>
    <property type="evidence" value="ECO:0007669"/>
    <property type="project" value="Ensembl"/>
</dbReference>
<dbReference type="GO" id="GO:0070542">
    <property type="term" value="P:response to fatty acid"/>
    <property type="evidence" value="ECO:0007669"/>
    <property type="project" value="Ensembl"/>
</dbReference>
<dbReference type="GO" id="GO:0032868">
    <property type="term" value="P:response to insulin"/>
    <property type="evidence" value="ECO:0007669"/>
    <property type="project" value="Ensembl"/>
</dbReference>
<dbReference type="GO" id="GO:0009410">
    <property type="term" value="P:response to xenobiotic stimulus"/>
    <property type="evidence" value="ECO:0007669"/>
    <property type="project" value="Ensembl"/>
</dbReference>
<dbReference type="CDD" id="cd19466">
    <property type="entry name" value="FABP3"/>
    <property type="match status" value="1"/>
</dbReference>
<dbReference type="FunFam" id="2.40.128.20:FF:000001">
    <property type="entry name" value="Fatty acid-binding protein, adipocyte"/>
    <property type="match status" value="1"/>
</dbReference>
<dbReference type="Gene3D" id="2.40.128.20">
    <property type="match status" value="1"/>
</dbReference>
<dbReference type="InterPro" id="IPR012674">
    <property type="entry name" value="Calycin"/>
</dbReference>
<dbReference type="InterPro" id="IPR000463">
    <property type="entry name" value="Fatty_acid-bd"/>
</dbReference>
<dbReference type="InterPro" id="IPR031259">
    <property type="entry name" value="ILBP"/>
</dbReference>
<dbReference type="InterPro" id="IPR000566">
    <property type="entry name" value="Lipocln_cytosolic_FA-bd_dom"/>
</dbReference>
<dbReference type="PANTHER" id="PTHR11955">
    <property type="entry name" value="FATTY ACID BINDING PROTEIN"/>
    <property type="match status" value="1"/>
</dbReference>
<dbReference type="Pfam" id="PF00061">
    <property type="entry name" value="Lipocalin"/>
    <property type="match status" value="1"/>
</dbReference>
<dbReference type="PRINTS" id="PR00178">
    <property type="entry name" value="FATTYACIDBP"/>
</dbReference>
<dbReference type="SUPFAM" id="SSF50814">
    <property type="entry name" value="Lipocalins"/>
    <property type="match status" value="1"/>
</dbReference>
<dbReference type="PROSITE" id="PS00214">
    <property type="entry name" value="FABP"/>
    <property type="match status" value="1"/>
</dbReference>
<comment type="function">
    <text>FABPs are thought to play a role in the intracellular transport of long-chain fatty acids and their acyl-CoA esters.</text>
</comment>
<comment type="interaction">
    <interactant intactId="EBI-704216">
        <id>P05413</id>
    </interactant>
    <interactant intactId="EBI-347978">
        <id>P37198</id>
        <label>NUP62</label>
    </interactant>
    <organismsDiffer>false</organismsDiffer>
    <experiments>7</experiments>
</comment>
<comment type="interaction">
    <interactant intactId="EBI-704216">
        <id>P05413</id>
    </interactant>
    <interactant intactId="EBI-308778">
        <id>A0MZ66</id>
        <label>SHTN1</label>
    </interactant>
    <organismsDiffer>false</organismsDiffer>
    <experiments>3</experiments>
</comment>
<comment type="interaction">
    <interactant intactId="EBI-704216">
        <id>P05413</id>
    </interactant>
    <interactant intactId="EBI-12097232">
        <id>A0MZ66-4</id>
        <label>SHTN1</label>
    </interactant>
    <organismsDiffer>false</organismsDiffer>
    <experiments>3</experiments>
</comment>
<comment type="subcellular location">
    <subcellularLocation>
        <location>Cytoplasm</location>
    </subcellularLocation>
</comment>
<comment type="domain">
    <text>Forms a beta-barrel structure that accommodates the hydrophobic ligand in its interior.</text>
</comment>
<comment type="similarity">
    <text evidence="6">Belongs to the calycin superfamily. Fatty-acid binding protein (FABP) family.</text>
</comment>
<keyword id="KW-0002">3D-structure</keyword>
<keyword id="KW-0007">Acetylation</keyword>
<keyword id="KW-0963">Cytoplasm</keyword>
<keyword id="KW-0903">Direct protein sequencing</keyword>
<keyword id="KW-0446">Lipid-binding</keyword>
<keyword id="KW-0597">Phosphoprotein</keyword>
<keyword id="KW-1267">Proteomics identification</keyword>
<keyword id="KW-1185">Reference proteome</keyword>
<keyword id="KW-0813">Transport</keyword>